<evidence type="ECO:0000255" key="1">
    <source>
        <dbReference type="HAMAP-Rule" id="MF_00075"/>
    </source>
</evidence>
<gene>
    <name evidence="1" type="primary">infA</name>
    <name type="ordered locus">UTI89_C0899</name>
</gene>
<sequence>MAKEDNIEMQGTVLETLPNTMFRVELENGHVVTAHISGKMRKNYIRILTGDKVTVELTPYDLSKGRIVFRSR</sequence>
<keyword id="KW-0963">Cytoplasm</keyword>
<keyword id="KW-0396">Initiation factor</keyword>
<keyword id="KW-0648">Protein biosynthesis</keyword>
<keyword id="KW-0694">RNA-binding</keyword>
<keyword id="KW-0699">rRNA-binding</keyword>
<dbReference type="EMBL" id="CP000243">
    <property type="protein sequence ID" value="ABE06384.1"/>
    <property type="molecule type" value="Genomic_DNA"/>
</dbReference>
<dbReference type="RefSeq" id="WP_001040187.1">
    <property type="nucleotide sequence ID" value="NZ_CP064825.1"/>
</dbReference>
<dbReference type="SMR" id="Q1RE30"/>
<dbReference type="GeneID" id="93776536"/>
<dbReference type="KEGG" id="eci:UTI89_C0899"/>
<dbReference type="HOGENOM" id="CLU_151267_1_0_6"/>
<dbReference type="Proteomes" id="UP000001952">
    <property type="component" value="Chromosome"/>
</dbReference>
<dbReference type="GO" id="GO:0005829">
    <property type="term" value="C:cytosol"/>
    <property type="evidence" value="ECO:0007669"/>
    <property type="project" value="TreeGrafter"/>
</dbReference>
<dbReference type="GO" id="GO:0043022">
    <property type="term" value="F:ribosome binding"/>
    <property type="evidence" value="ECO:0007669"/>
    <property type="project" value="UniProtKB-UniRule"/>
</dbReference>
<dbReference type="GO" id="GO:0019843">
    <property type="term" value="F:rRNA binding"/>
    <property type="evidence" value="ECO:0007669"/>
    <property type="project" value="UniProtKB-UniRule"/>
</dbReference>
<dbReference type="GO" id="GO:0003743">
    <property type="term" value="F:translation initiation factor activity"/>
    <property type="evidence" value="ECO:0007669"/>
    <property type="project" value="UniProtKB-UniRule"/>
</dbReference>
<dbReference type="CDD" id="cd04451">
    <property type="entry name" value="S1_IF1"/>
    <property type="match status" value="1"/>
</dbReference>
<dbReference type="FunFam" id="2.40.50.140:FF:000002">
    <property type="entry name" value="Translation initiation factor IF-1"/>
    <property type="match status" value="1"/>
</dbReference>
<dbReference type="Gene3D" id="2.40.50.140">
    <property type="entry name" value="Nucleic acid-binding proteins"/>
    <property type="match status" value="1"/>
</dbReference>
<dbReference type="HAMAP" id="MF_00075">
    <property type="entry name" value="IF_1"/>
    <property type="match status" value="1"/>
</dbReference>
<dbReference type="InterPro" id="IPR012340">
    <property type="entry name" value="NA-bd_OB-fold"/>
</dbReference>
<dbReference type="InterPro" id="IPR006196">
    <property type="entry name" value="RNA-binding_domain_S1_IF1"/>
</dbReference>
<dbReference type="InterPro" id="IPR003029">
    <property type="entry name" value="S1_domain"/>
</dbReference>
<dbReference type="InterPro" id="IPR004368">
    <property type="entry name" value="TIF_IF1"/>
</dbReference>
<dbReference type="NCBIfam" id="TIGR00008">
    <property type="entry name" value="infA"/>
    <property type="match status" value="1"/>
</dbReference>
<dbReference type="PANTHER" id="PTHR33370">
    <property type="entry name" value="TRANSLATION INITIATION FACTOR IF-1, CHLOROPLASTIC"/>
    <property type="match status" value="1"/>
</dbReference>
<dbReference type="PANTHER" id="PTHR33370:SF1">
    <property type="entry name" value="TRANSLATION INITIATION FACTOR IF-1, CHLOROPLASTIC"/>
    <property type="match status" value="1"/>
</dbReference>
<dbReference type="Pfam" id="PF01176">
    <property type="entry name" value="eIF-1a"/>
    <property type="match status" value="1"/>
</dbReference>
<dbReference type="SMART" id="SM00316">
    <property type="entry name" value="S1"/>
    <property type="match status" value="1"/>
</dbReference>
<dbReference type="SUPFAM" id="SSF50249">
    <property type="entry name" value="Nucleic acid-binding proteins"/>
    <property type="match status" value="1"/>
</dbReference>
<dbReference type="PROSITE" id="PS50832">
    <property type="entry name" value="S1_IF1_TYPE"/>
    <property type="match status" value="1"/>
</dbReference>
<comment type="function">
    <text evidence="1">One of the essential components for the initiation of protein synthesis. Stabilizes the binding of IF-2 and IF-3 on the 30S subunit to which N-formylmethionyl-tRNA(fMet) subsequently binds. Helps modulate mRNA selection, yielding the 30S pre-initiation complex (PIC). Upon addition of the 50S ribosomal subunit IF-1, IF-2 and IF-3 are released leaving the mature 70S translation initiation complex.</text>
</comment>
<comment type="subunit">
    <text evidence="1">Component of the 30S ribosomal translation pre-initiation complex which assembles on the 30S ribosome in the order IF-2 and IF-3, IF-1 and N-formylmethionyl-tRNA(fMet); mRNA recruitment can occur at any time during PIC assembly.</text>
</comment>
<comment type="subcellular location">
    <subcellularLocation>
        <location evidence="1">Cytoplasm</location>
    </subcellularLocation>
</comment>
<comment type="similarity">
    <text evidence="1">Belongs to the IF-1 family.</text>
</comment>
<accession>Q1RE30</accession>
<proteinExistence type="inferred from homology"/>
<name>IF1_ECOUT</name>
<reference key="1">
    <citation type="journal article" date="2006" name="Proc. Natl. Acad. Sci. U.S.A.">
        <title>Identification of genes subject to positive selection in uropathogenic strains of Escherichia coli: a comparative genomics approach.</title>
        <authorList>
            <person name="Chen S.L."/>
            <person name="Hung C.-S."/>
            <person name="Xu J."/>
            <person name="Reigstad C.S."/>
            <person name="Magrini V."/>
            <person name="Sabo A."/>
            <person name="Blasiar D."/>
            <person name="Bieri T."/>
            <person name="Meyer R.R."/>
            <person name="Ozersky P."/>
            <person name="Armstrong J.R."/>
            <person name="Fulton R.S."/>
            <person name="Latreille J.P."/>
            <person name="Spieth J."/>
            <person name="Hooton T.M."/>
            <person name="Mardis E.R."/>
            <person name="Hultgren S.J."/>
            <person name="Gordon J.I."/>
        </authorList>
    </citation>
    <scope>NUCLEOTIDE SEQUENCE [LARGE SCALE GENOMIC DNA]</scope>
    <source>
        <strain>UTI89 / UPEC</strain>
    </source>
</reference>
<organism>
    <name type="scientific">Escherichia coli (strain UTI89 / UPEC)</name>
    <dbReference type="NCBI Taxonomy" id="364106"/>
    <lineage>
        <taxon>Bacteria</taxon>
        <taxon>Pseudomonadati</taxon>
        <taxon>Pseudomonadota</taxon>
        <taxon>Gammaproteobacteria</taxon>
        <taxon>Enterobacterales</taxon>
        <taxon>Enterobacteriaceae</taxon>
        <taxon>Escherichia</taxon>
    </lineage>
</organism>
<protein>
    <recommendedName>
        <fullName evidence="1">Translation initiation factor IF-1</fullName>
    </recommendedName>
</protein>
<feature type="chain" id="PRO_0000263799" description="Translation initiation factor IF-1">
    <location>
        <begin position="1"/>
        <end position="72"/>
    </location>
</feature>
<feature type="domain" description="S1-like" evidence="1">
    <location>
        <begin position="1"/>
        <end position="72"/>
    </location>
</feature>